<protein>
    <recommendedName>
        <fullName evidence="1">tRNA (guanine-N(1)-)-methyltransferase</fullName>
        <ecNumber evidence="1">2.1.1.228</ecNumber>
    </recommendedName>
    <alternativeName>
        <fullName evidence="1">M1G-methyltransferase</fullName>
    </alternativeName>
    <alternativeName>
        <fullName evidence="1">tRNA [GM37] methyltransferase</fullName>
    </alternativeName>
</protein>
<reference key="1">
    <citation type="journal article" date="2007" name="Nat. Biotechnol.">
        <title>Complete genome sequence of the myxobacterium Sorangium cellulosum.</title>
        <authorList>
            <person name="Schneiker S."/>
            <person name="Perlova O."/>
            <person name="Kaiser O."/>
            <person name="Gerth K."/>
            <person name="Alici A."/>
            <person name="Altmeyer M.O."/>
            <person name="Bartels D."/>
            <person name="Bekel T."/>
            <person name="Beyer S."/>
            <person name="Bode E."/>
            <person name="Bode H.B."/>
            <person name="Bolten C.J."/>
            <person name="Choudhuri J.V."/>
            <person name="Doss S."/>
            <person name="Elnakady Y.A."/>
            <person name="Frank B."/>
            <person name="Gaigalat L."/>
            <person name="Goesmann A."/>
            <person name="Groeger C."/>
            <person name="Gross F."/>
            <person name="Jelsbak L."/>
            <person name="Jelsbak L."/>
            <person name="Kalinowski J."/>
            <person name="Kegler C."/>
            <person name="Knauber T."/>
            <person name="Konietzny S."/>
            <person name="Kopp M."/>
            <person name="Krause L."/>
            <person name="Krug D."/>
            <person name="Linke B."/>
            <person name="Mahmud T."/>
            <person name="Martinez-Arias R."/>
            <person name="McHardy A.C."/>
            <person name="Merai M."/>
            <person name="Meyer F."/>
            <person name="Mormann S."/>
            <person name="Munoz-Dorado J."/>
            <person name="Perez J."/>
            <person name="Pradella S."/>
            <person name="Rachid S."/>
            <person name="Raddatz G."/>
            <person name="Rosenau F."/>
            <person name="Rueckert C."/>
            <person name="Sasse F."/>
            <person name="Scharfe M."/>
            <person name="Schuster S.C."/>
            <person name="Suen G."/>
            <person name="Treuner-Lange A."/>
            <person name="Velicer G.J."/>
            <person name="Vorholter F.-J."/>
            <person name="Weissman K.J."/>
            <person name="Welch R.D."/>
            <person name="Wenzel S.C."/>
            <person name="Whitworth D.E."/>
            <person name="Wilhelm S."/>
            <person name="Wittmann C."/>
            <person name="Bloecker H."/>
            <person name="Puehler A."/>
            <person name="Mueller R."/>
        </authorList>
    </citation>
    <scope>NUCLEOTIDE SEQUENCE [LARGE SCALE GENOMIC DNA]</scope>
    <source>
        <strain>So ce56</strain>
    </source>
</reference>
<gene>
    <name evidence="1" type="primary">trmD</name>
    <name type="ordered locus">sce4436</name>
</gene>
<evidence type="ECO:0000255" key="1">
    <source>
        <dbReference type="HAMAP-Rule" id="MF_00605"/>
    </source>
</evidence>
<evidence type="ECO:0000256" key="2">
    <source>
        <dbReference type="SAM" id="MobiDB-lite"/>
    </source>
</evidence>
<keyword id="KW-0963">Cytoplasm</keyword>
<keyword id="KW-0489">Methyltransferase</keyword>
<keyword id="KW-1185">Reference proteome</keyword>
<keyword id="KW-0949">S-adenosyl-L-methionine</keyword>
<keyword id="KW-0808">Transferase</keyword>
<keyword id="KW-0819">tRNA processing</keyword>
<accession>A9F3N2</accession>
<organism>
    <name type="scientific">Sorangium cellulosum (strain So ce56)</name>
    <name type="common">Polyangium cellulosum (strain So ce56)</name>
    <dbReference type="NCBI Taxonomy" id="448385"/>
    <lineage>
        <taxon>Bacteria</taxon>
        <taxon>Pseudomonadati</taxon>
        <taxon>Myxococcota</taxon>
        <taxon>Polyangia</taxon>
        <taxon>Polyangiales</taxon>
        <taxon>Polyangiaceae</taxon>
        <taxon>Sorangium</taxon>
    </lineage>
</organism>
<name>TRMD_SORC5</name>
<feature type="chain" id="PRO_1000082538" description="tRNA (guanine-N(1)-)-methyltransferase">
    <location>
        <begin position="1"/>
        <end position="264"/>
    </location>
</feature>
<feature type="region of interest" description="Disordered" evidence="2">
    <location>
        <begin position="240"/>
        <end position="264"/>
    </location>
</feature>
<feature type="compositionally biased region" description="Basic and acidic residues" evidence="2">
    <location>
        <begin position="240"/>
        <end position="251"/>
    </location>
</feature>
<feature type="compositionally biased region" description="Acidic residues" evidence="2">
    <location>
        <begin position="255"/>
        <end position="264"/>
    </location>
</feature>
<feature type="binding site" evidence="1">
    <location>
        <position position="133"/>
    </location>
    <ligand>
        <name>S-adenosyl-L-methionine</name>
        <dbReference type="ChEBI" id="CHEBI:59789"/>
    </ligand>
</feature>
<feature type="binding site" evidence="1">
    <location>
        <begin position="152"/>
        <end position="157"/>
    </location>
    <ligand>
        <name>S-adenosyl-L-methionine</name>
        <dbReference type="ChEBI" id="CHEBI:59789"/>
    </ligand>
</feature>
<proteinExistence type="inferred from homology"/>
<dbReference type="EC" id="2.1.1.228" evidence="1"/>
<dbReference type="EMBL" id="AM746676">
    <property type="protein sequence ID" value="CAN94599.1"/>
    <property type="molecule type" value="Genomic_DNA"/>
</dbReference>
<dbReference type="RefSeq" id="WP_012237068.1">
    <property type="nucleotide sequence ID" value="NC_010162.1"/>
</dbReference>
<dbReference type="SMR" id="A9F3N2"/>
<dbReference type="STRING" id="448385.sce4436"/>
<dbReference type="KEGG" id="scl:sce4436"/>
<dbReference type="eggNOG" id="COG0336">
    <property type="taxonomic scope" value="Bacteria"/>
</dbReference>
<dbReference type="HOGENOM" id="CLU_047363_0_0_7"/>
<dbReference type="OrthoDB" id="9807416at2"/>
<dbReference type="BioCyc" id="SCEL448385:SCE_RS22765-MONOMER"/>
<dbReference type="Proteomes" id="UP000002139">
    <property type="component" value="Chromosome"/>
</dbReference>
<dbReference type="GO" id="GO:0005829">
    <property type="term" value="C:cytosol"/>
    <property type="evidence" value="ECO:0007669"/>
    <property type="project" value="TreeGrafter"/>
</dbReference>
<dbReference type="GO" id="GO:0052906">
    <property type="term" value="F:tRNA (guanine(37)-N1)-methyltransferase activity"/>
    <property type="evidence" value="ECO:0007669"/>
    <property type="project" value="UniProtKB-UniRule"/>
</dbReference>
<dbReference type="GO" id="GO:0002939">
    <property type="term" value="P:tRNA N1-guanine methylation"/>
    <property type="evidence" value="ECO:0007669"/>
    <property type="project" value="TreeGrafter"/>
</dbReference>
<dbReference type="CDD" id="cd18080">
    <property type="entry name" value="TrmD-like"/>
    <property type="match status" value="1"/>
</dbReference>
<dbReference type="Gene3D" id="3.40.1280.10">
    <property type="match status" value="1"/>
</dbReference>
<dbReference type="Gene3D" id="1.10.1270.20">
    <property type="entry name" value="tRNA(m1g37)methyltransferase, domain 2"/>
    <property type="match status" value="1"/>
</dbReference>
<dbReference type="HAMAP" id="MF_00605">
    <property type="entry name" value="TrmD"/>
    <property type="match status" value="1"/>
</dbReference>
<dbReference type="InterPro" id="IPR029028">
    <property type="entry name" value="Alpha/beta_knot_MTases"/>
</dbReference>
<dbReference type="InterPro" id="IPR023148">
    <property type="entry name" value="tRNA_m1G_MeTrfase_C_sf"/>
</dbReference>
<dbReference type="InterPro" id="IPR002649">
    <property type="entry name" value="tRNA_m1G_MeTrfase_TrmD"/>
</dbReference>
<dbReference type="InterPro" id="IPR029026">
    <property type="entry name" value="tRNA_m1G_MTases_N"/>
</dbReference>
<dbReference type="InterPro" id="IPR016009">
    <property type="entry name" value="tRNA_MeTrfase_TRMD/TRM10"/>
</dbReference>
<dbReference type="NCBIfam" id="NF000648">
    <property type="entry name" value="PRK00026.1"/>
    <property type="match status" value="1"/>
</dbReference>
<dbReference type="NCBIfam" id="TIGR00088">
    <property type="entry name" value="trmD"/>
    <property type="match status" value="1"/>
</dbReference>
<dbReference type="PANTHER" id="PTHR46417">
    <property type="entry name" value="TRNA (GUANINE-N(1)-)-METHYLTRANSFERASE"/>
    <property type="match status" value="1"/>
</dbReference>
<dbReference type="PANTHER" id="PTHR46417:SF1">
    <property type="entry name" value="TRNA (GUANINE-N(1)-)-METHYLTRANSFERASE"/>
    <property type="match status" value="1"/>
</dbReference>
<dbReference type="Pfam" id="PF01746">
    <property type="entry name" value="tRNA_m1G_MT"/>
    <property type="match status" value="1"/>
</dbReference>
<dbReference type="PIRSF" id="PIRSF000386">
    <property type="entry name" value="tRNA_mtase"/>
    <property type="match status" value="1"/>
</dbReference>
<dbReference type="SUPFAM" id="SSF75217">
    <property type="entry name" value="alpha/beta knot"/>
    <property type="match status" value="1"/>
</dbReference>
<comment type="function">
    <text evidence="1">Specifically methylates guanosine-37 in various tRNAs.</text>
</comment>
<comment type="catalytic activity">
    <reaction evidence="1">
        <text>guanosine(37) in tRNA + S-adenosyl-L-methionine = N(1)-methylguanosine(37) in tRNA + S-adenosyl-L-homocysteine + H(+)</text>
        <dbReference type="Rhea" id="RHEA:36899"/>
        <dbReference type="Rhea" id="RHEA-COMP:10145"/>
        <dbReference type="Rhea" id="RHEA-COMP:10147"/>
        <dbReference type="ChEBI" id="CHEBI:15378"/>
        <dbReference type="ChEBI" id="CHEBI:57856"/>
        <dbReference type="ChEBI" id="CHEBI:59789"/>
        <dbReference type="ChEBI" id="CHEBI:73542"/>
        <dbReference type="ChEBI" id="CHEBI:74269"/>
        <dbReference type="EC" id="2.1.1.228"/>
    </reaction>
</comment>
<comment type="subunit">
    <text evidence="1">Homodimer.</text>
</comment>
<comment type="subcellular location">
    <subcellularLocation>
        <location evidence="1">Cytoplasm</location>
    </subcellularLocation>
</comment>
<comment type="similarity">
    <text evidence="1">Belongs to the RNA methyltransferase TrmD family.</text>
</comment>
<sequence>MRIDVVTLFPELFEGFLAIGMVGRALASGALAVRTRSPREFGLGRHRSVDDTPYGGGSGMVMRVDCIVRCLEALDEAAAEGVASSAPPGADATASSGPLPRAHRVLLTPQGQPFRQEKAIELAARPAVALVCGRYEGFDERVRAFVDEEISLGDFVMTGGEVAAMAVIDACVRLLPGVLGNAVSAEHESHSPALAGLLEYPQYTRPVEFRGHKVPDVLQQGNHAAIARWRRAEAELRTAQRRPDLWRKARGGEPPADESGEVRR</sequence>